<evidence type="ECO:0000255" key="1"/>
<evidence type="ECO:0000255" key="2">
    <source>
        <dbReference type="PROSITE-ProRule" id="PRU00274"/>
    </source>
</evidence>
<evidence type="ECO:0000269" key="3">
    <source>
    </source>
</evidence>
<evidence type="ECO:0000269" key="4">
    <source>
    </source>
</evidence>
<evidence type="ECO:0000303" key="5">
    <source>
    </source>
</evidence>
<evidence type="ECO:0000303" key="6">
    <source>
    </source>
</evidence>
<evidence type="ECO:0000305" key="7"/>
<evidence type="ECO:0000312" key="8">
    <source>
        <dbReference type="EMBL" id="AAB69057.1"/>
    </source>
</evidence>
<evidence type="ECO:0000312" key="9">
    <source>
        <dbReference type="EMBL" id="AAI39221.1"/>
    </source>
</evidence>
<evidence type="ECO:0000312" key="10">
    <source>
        <dbReference type="EMBL" id="AAI39224.1"/>
    </source>
</evidence>
<evidence type="ECO:0000312" key="11">
    <source>
        <dbReference type="EMBL" id="BAA74760.1"/>
    </source>
</evidence>
<evidence type="ECO:0000312" key="12">
    <source>
        <dbReference type="EMBL" id="BAA85187.1"/>
    </source>
</evidence>
<evidence type="ECO:0000312" key="13">
    <source>
        <dbReference type="EMBL" id="BAB25300.1"/>
    </source>
</evidence>
<evidence type="ECO:0000312" key="14">
    <source>
        <dbReference type="EMBL" id="BAE35815.1"/>
    </source>
</evidence>
<evidence type="ECO:0000312" key="15">
    <source>
        <dbReference type="MGI" id="MGI:102756"/>
    </source>
</evidence>
<evidence type="ECO:0000312" key="16">
    <source>
        <dbReference type="Proteomes" id="UP000000589"/>
    </source>
</evidence>
<evidence type="ECO:0007744" key="17">
    <source>
    </source>
</evidence>
<accession>Q9QUK9</accession>
<feature type="signal peptide" evidence="1">
    <location>
        <begin position="1"/>
        <end position="15"/>
    </location>
</feature>
<feature type="propeptide" id="PRO_0000457720" description="Activation peptide" evidence="7">
    <location>
        <begin position="16"/>
        <end position="23"/>
    </location>
</feature>
<feature type="chain" id="PRO_5015099940" description="Trypsin-5" evidence="1">
    <location>
        <begin position="24"/>
        <end position="246"/>
    </location>
</feature>
<feature type="domain" description="Peptidase S1" evidence="1">
    <location>
        <begin position="24"/>
        <end position="244"/>
    </location>
</feature>
<feature type="active site" description="Charge relay system" evidence="2">
    <location>
        <position position="63"/>
    </location>
</feature>
<feature type="active site" description="Charge relay system" evidence="2">
    <location>
        <position position="107"/>
    </location>
</feature>
<feature type="active site" description="Charge relay system" evidence="2">
    <location>
        <position position="200"/>
    </location>
</feature>
<feature type="site" description="Cleavage; by CTRC" evidence="4">
    <location>
        <position position="81"/>
    </location>
</feature>
<feature type="site" description="Cleavage; by autolysis" evidence="4">
    <location>
        <position position="122"/>
    </location>
</feature>
<feature type="site" description="Cleavage; by CTRC" evidence="4">
    <location>
        <position position="150"/>
    </location>
</feature>
<feature type="site" description="Cleavage; by autolysis" evidence="4">
    <location>
        <position position="193"/>
    </location>
</feature>
<feature type="disulfide bond" evidence="2">
    <location>
        <begin position="48"/>
        <end position="64"/>
    </location>
</feature>
<feature type="disulfide bond" evidence="2">
    <location>
        <begin position="139"/>
        <end position="206"/>
    </location>
</feature>
<feature type="disulfide bond" evidence="2">
    <location>
        <begin position="171"/>
        <end position="185"/>
    </location>
</feature>
<feature type="disulfide bond" evidence="2">
    <location>
        <begin position="196"/>
        <end position="220"/>
    </location>
</feature>
<organism evidence="12">
    <name type="scientific">Mus musculus</name>
    <name type="common">Mouse</name>
    <dbReference type="NCBI Taxonomy" id="10090"/>
    <lineage>
        <taxon>Eukaryota</taxon>
        <taxon>Metazoa</taxon>
        <taxon>Chordata</taxon>
        <taxon>Craniata</taxon>
        <taxon>Vertebrata</taxon>
        <taxon>Euteleostomi</taxon>
        <taxon>Mammalia</taxon>
        <taxon>Eutheria</taxon>
        <taxon>Euarchontoglires</taxon>
        <taxon>Glires</taxon>
        <taxon>Rodentia</taxon>
        <taxon>Myomorpha</taxon>
        <taxon>Muroidea</taxon>
        <taxon>Muridae</taxon>
        <taxon>Murinae</taxon>
        <taxon>Mus</taxon>
        <taxon>Mus</taxon>
    </lineage>
</organism>
<dbReference type="EC" id="3.4.21.4" evidence="4"/>
<dbReference type="EMBL" id="AB017031">
    <property type="protein sequence ID" value="BAA74760.1"/>
    <property type="molecule type" value="Genomic_DNA"/>
</dbReference>
<dbReference type="EMBL" id="AB009661">
    <property type="protein sequence ID" value="BAA85187.1"/>
    <property type="molecule type" value="mRNA"/>
</dbReference>
<dbReference type="EMBL" id="AE000664">
    <property type="protein sequence ID" value="AAB69057.1"/>
    <property type="molecule type" value="Genomic_DNA"/>
</dbReference>
<dbReference type="EMBL" id="AK007843">
    <property type="protein sequence ID" value="BAB25300.1"/>
    <property type="molecule type" value="mRNA"/>
</dbReference>
<dbReference type="EMBL" id="AK160484">
    <property type="protein sequence ID" value="BAE35815.1"/>
    <property type="molecule type" value="mRNA"/>
</dbReference>
<dbReference type="EMBL" id="BC139220">
    <property type="protein sequence ID" value="AAI39221.1"/>
    <property type="molecule type" value="mRNA"/>
</dbReference>
<dbReference type="EMBL" id="BC139223">
    <property type="protein sequence ID" value="AAI39224.1"/>
    <property type="molecule type" value="mRNA"/>
</dbReference>
<dbReference type="CCDS" id="CCDS20045.1"/>
<dbReference type="RefSeq" id="NP_001003405.1">
    <property type="nucleotide sequence ID" value="NM_001003405.4"/>
</dbReference>
<dbReference type="SMR" id="Q9QUK9"/>
<dbReference type="FunCoup" id="Q9QUK9">
    <property type="interactions" value="757"/>
</dbReference>
<dbReference type="STRING" id="10090.ENSMUSP00000064498"/>
<dbReference type="MEROPS" id="S01.057"/>
<dbReference type="MEROPS" id="S01.058"/>
<dbReference type="GlyGen" id="Q9QUK9">
    <property type="glycosylation" value="1 site, 1 O-linked glycan (1 site)"/>
</dbReference>
<dbReference type="jPOST" id="Q9QUK9"/>
<dbReference type="PaxDb" id="10090-ENSMUSP00000064498"/>
<dbReference type="PeptideAtlas" id="Q9QUK9"/>
<dbReference type="ProteomicsDB" id="339082"/>
<dbReference type="Ensembl" id="ENSMUST00000064324.12">
    <property type="protein sequence ID" value="ENSMUSP00000064498.6"/>
    <property type="gene ID" value="ENSMUSG00000036938.18"/>
</dbReference>
<dbReference type="GeneID" id="103964"/>
<dbReference type="KEGG" id="mmu:103964"/>
<dbReference type="UCSC" id="uc009bot.2">
    <property type="organism name" value="mouse"/>
</dbReference>
<dbReference type="AGR" id="MGI:102756"/>
<dbReference type="CTD" id="103964"/>
<dbReference type="MGI" id="MGI:102756">
    <property type="gene designation" value="Try5"/>
</dbReference>
<dbReference type="VEuPathDB" id="HostDB:ENSMUSG00000036938"/>
<dbReference type="eggNOG" id="KOG3627">
    <property type="taxonomic scope" value="Eukaryota"/>
</dbReference>
<dbReference type="GeneTree" id="ENSGT01050000244883"/>
<dbReference type="HOGENOM" id="CLU_006842_7_0_1"/>
<dbReference type="InParanoid" id="Q9QUK9"/>
<dbReference type="OMA" id="HPRYSSW"/>
<dbReference type="OrthoDB" id="10059102at2759"/>
<dbReference type="Reactome" id="R-MMU-1462054">
    <property type="pathway name" value="Alpha-defensins"/>
</dbReference>
<dbReference type="Reactome" id="R-MMU-1592389">
    <property type="pathway name" value="Activation of Matrix Metalloproteinases"/>
</dbReference>
<dbReference type="Reactome" id="R-MMU-6798695">
    <property type="pathway name" value="Neutrophil degranulation"/>
</dbReference>
<dbReference type="Reactome" id="R-MMU-6803157">
    <property type="pathway name" value="Antimicrobial peptides"/>
</dbReference>
<dbReference type="BioGRID-ORCS" id="103964">
    <property type="hits" value="6 hits in 58 CRISPR screens"/>
</dbReference>
<dbReference type="ChiTaRS" id="Try5">
    <property type="organism name" value="mouse"/>
</dbReference>
<dbReference type="PRO" id="PR:Q9QUK9"/>
<dbReference type="Proteomes" id="UP000000589">
    <property type="component" value="Chromosome 6"/>
</dbReference>
<dbReference type="RNAct" id="Q9QUK9">
    <property type="molecule type" value="protein"/>
</dbReference>
<dbReference type="Bgee" id="ENSMUSG00000036938">
    <property type="expression patterns" value="Expressed in pancreas and 21 other cell types or tissues"/>
</dbReference>
<dbReference type="ExpressionAtlas" id="Q9QUK9">
    <property type="expression patterns" value="baseline and differential"/>
</dbReference>
<dbReference type="GO" id="GO:0001669">
    <property type="term" value="C:acrosomal vesicle"/>
    <property type="evidence" value="ECO:0000314"/>
    <property type="project" value="UniProtKB"/>
</dbReference>
<dbReference type="GO" id="GO:0004252">
    <property type="term" value="F:serine-type endopeptidase activity"/>
    <property type="evidence" value="ECO:0000314"/>
    <property type="project" value="MGI"/>
</dbReference>
<dbReference type="GO" id="GO:0006508">
    <property type="term" value="P:proteolysis"/>
    <property type="evidence" value="ECO:0007669"/>
    <property type="project" value="UniProtKB-KW"/>
</dbReference>
<dbReference type="CDD" id="cd00190">
    <property type="entry name" value="Tryp_SPc"/>
    <property type="match status" value="1"/>
</dbReference>
<dbReference type="FunFam" id="2.40.10.10:FF:000019">
    <property type="entry name" value="Anionic trypsin"/>
    <property type="match status" value="1"/>
</dbReference>
<dbReference type="Gene3D" id="2.40.10.10">
    <property type="entry name" value="Trypsin-like serine proteases"/>
    <property type="match status" value="2"/>
</dbReference>
<dbReference type="InterPro" id="IPR009003">
    <property type="entry name" value="Peptidase_S1_PA"/>
</dbReference>
<dbReference type="InterPro" id="IPR043504">
    <property type="entry name" value="Peptidase_S1_PA_chymotrypsin"/>
</dbReference>
<dbReference type="InterPro" id="IPR001314">
    <property type="entry name" value="Peptidase_S1A"/>
</dbReference>
<dbReference type="InterPro" id="IPR050127">
    <property type="entry name" value="Serine_Proteases_S1"/>
</dbReference>
<dbReference type="InterPro" id="IPR001254">
    <property type="entry name" value="Trypsin_dom"/>
</dbReference>
<dbReference type="InterPro" id="IPR018114">
    <property type="entry name" value="TRYPSIN_HIS"/>
</dbReference>
<dbReference type="InterPro" id="IPR033116">
    <property type="entry name" value="TRYPSIN_SER"/>
</dbReference>
<dbReference type="PANTHER" id="PTHR24264:SF57">
    <property type="entry name" value="TRYPSIN-2"/>
    <property type="match status" value="1"/>
</dbReference>
<dbReference type="PANTHER" id="PTHR24264">
    <property type="entry name" value="TRYPSIN-RELATED"/>
    <property type="match status" value="1"/>
</dbReference>
<dbReference type="Pfam" id="PF00089">
    <property type="entry name" value="Trypsin"/>
    <property type="match status" value="1"/>
</dbReference>
<dbReference type="PRINTS" id="PR00722">
    <property type="entry name" value="CHYMOTRYPSIN"/>
</dbReference>
<dbReference type="SMART" id="SM00020">
    <property type="entry name" value="Tryp_SPc"/>
    <property type="match status" value="1"/>
</dbReference>
<dbReference type="SUPFAM" id="SSF50494">
    <property type="entry name" value="Trypsin-like serine proteases"/>
    <property type="match status" value="1"/>
</dbReference>
<dbReference type="PROSITE" id="PS50240">
    <property type="entry name" value="TRYPSIN_DOM"/>
    <property type="match status" value="1"/>
</dbReference>
<dbReference type="PROSITE" id="PS00134">
    <property type="entry name" value="TRYPSIN_HIS"/>
    <property type="match status" value="1"/>
</dbReference>
<dbReference type="PROSITE" id="PS00135">
    <property type="entry name" value="TRYPSIN_SER"/>
    <property type="match status" value="1"/>
</dbReference>
<gene>
    <name evidence="15" type="primary">Try5</name>
    <name evidence="5" type="synonym">Tc</name>
    <name evidence="5" type="synonym">Tesp4</name>
</gene>
<comment type="function">
    <text evidence="4">Serine protease capable of autoactivation.</text>
</comment>
<comment type="catalytic activity">
    <reaction evidence="4">
        <text>Preferential cleavage: Arg-|-Xaa, Lys-|-Xaa.</text>
        <dbReference type="EC" id="3.4.21.4"/>
    </reaction>
</comment>
<comment type="activity regulation">
    <text evidence="4">Activated by autocatalytic cleavage (PubMed:23814066). Cleavage by CTRC inhibits autoactivation (PubMed:23814066).</text>
</comment>
<comment type="subcellular location">
    <subcellularLocation>
        <location evidence="3">Cytoplasmic vesicle</location>
        <location evidence="3">Secretory vesicle</location>
        <location evidence="3">Acrosome</location>
    </subcellularLocation>
</comment>
<comment type="tissue specificity">
    <text evidence="3">Expressed in the heart, lung, brain, kidney, liver, epididymis, ovary and uterus. Expression in the testis is limited to round and elongating spermatids.</text>
</comment>
<comment type="developmental stage">
    <text evidence="3">Expressed in the testis from 20 days of age onwards.</text>
</comment>
<comment type="PTM">
    <text evidence="4">Proteolytically cleaved and activated by an autocatalytic mechanism (PubMed:23814066). Cleavage by CTRC inhibits autoactivation (PubMed:23814066).</text>
</comment>
<comment type="similarity">
    <text evidence="2">Belongs to the peptidase S1 family.</text>
</comment>
<sequence length="246" mass="26277">MNSLLFLALVGAAVAFPVDDDDKIVGGYTCRENSIPYQVSLNSGYHFCGGSLINDQWVVSAAHCYKTRIQVRLGEHNINVLEGNEQFVNSAKIIKHPNFNSRTLNNDIMLIKLASPVTLNARVATVALPSSCAPAGTQCLISGWGNTLSFGVNNPDLLQCLDAPLLPQADCEASYPGKITNNMICVGFLEGGKDSCQGDSGGPVVCNGQLQGIVSWGYGCALKDNPGVYTKVCNYVDWIQDTIAAN</sequence>
<name>TRY5_MOUSE</name>
<keyword id="KW-0068">Autocatalytic cleavage</keyword>
<keyword id="KW-0968">Cytoplasmic vesicle</keyword>
<keyword id="KW-1015">Disulfide bond</keyword>
<keyword id="KW-0378">Hydrolase</keyword>
<keyword id="KW-0645">Protease</keyword>
<keyword id="KW-1185">Reference proteome</keyword>
<keyword id="KW-0720">Serine protease</keyword>
<keyword id="KW-0732">Signal</keyword>
<keyword id="KW-0865">Zymogen</keyword>
<reference evidence="12" key="1">
    <citation type="journal article" date="1999" name="J. Biol. Chem.">
        <title>A homologue of pancreatic trypsin is localized in the acrosome of mammalian sperm and is released during acrosome reaction.</title>
        <authorList>
            <person name="Ohmura K."/>
            <person name="Kohno N."/>
            <person name="Kobayashi Y."/>
            <person name="Yamagata K."/>
            <person name="Sato S."/>
            <person name="Kashiwabara S."/>
            <person name="Baba T."/>
        </authorList>
    </citation>
    <scope>NUCLEOTIDE SEQUENCE [GENOMIC DNA / MRNA]</scope>
    <scope>SUBCELLULAR LOCATION</scope>
    <scope>TISSUE SPECIFICITY</scope>
    <scope>DEVELOPMENTAL STAGE</scope>
    <source>
        <strain evidence="11">129/SvJ</strain>
        <tissue evidence="12">Testis</tissue>
    </source>
</reference>
<reference evidence="8" key="2">
    <citation type="journal article" date="2001" name="J. Immunol.">
        <title>Differential transcriptional regulation of individual TCR V beta segments before gene rearrangement.</title>
        <authorList>
            <person name="Chen F."/>
            <person name="Rowen L."/>
            <person name="Hood L."/>
            <person name="Rothenberg E.V."/>
        </authorList>
    </citation>
    <scope>NUCLEOTIDE SEQUENCE [GENOMIC DNA]</scope>
</reference>
<reference evidence="13 14" key="3">
    <citation type="journal article" date="2005" name="Science">
        <title>The transcriptional landscape of the mammalian genome.</title>
        <authorList>
            <person name="Carninci P."/>
            <person name="Kasukawa T."/>
            <person name="Katayama S."/>
            <person name="Gough J."/>
            <person name="Frith M.C."/>
            <person name="Maeda N."/>
            <person name="Oyama R."/>
            <person name="Ravasi T."/>
            <person name="Lenhard B."/>
            <person name="Wells C."/>
            <person name="Kodzius R."/>
            <person name="Shimokawa K."/>
            <person name="Bajic V.B."/>
            <person name="Brenner S.E."/>
            <person name="Batalov S."/>
            <person name="Forrest A.R."/>
            <person name="Zavolan M."/>
            <person name="Davis M.J."/>
            <person name="Wilming L.G."/>
            <person name="Aidinis V."/>
            <person name="Allen J.E."/>
            <person name="Ambesi-Impiombato A."/>
            <person name="Apweiler R."/>
            <person name="Aturaliya R.N."/>
            <person name="Bailey T.L."/>
            <person name="Bansal M."/>
            <person name="Baxter L."/>
            <person name="Beisel K.W."/>
            <person name="Bersano T."/>
            <person name="Bono H."/>
            <person name="Chalk A.M."/>
            <person name="Chiu K.P."/>
            <person name="Choudhary V."/>
            <person name="Christoffels A."/>
            <person name="Clutterbuck D.R."/>
            <person name="Crowe M.L."/>
            <person name="Dalla E."/>
            <person name="Dalrymple B.P."/>
            <person name="de Bono B."/>
            <person name="Della Gatta G."/>
            <person name="di Bernardo D."/>
            <person name="Down T."/>
            <person name="Engstrom P."/>
            <person name="Fagiolini M."/>
            <person name="Faulkner G."/>
            <person name="Fletcher C.F."/>
            <person name="Fukushima T."/>
            <person name="Furuno M."/>
            <person name="Futaki S."/>
            <person name="Gariboldi M."/>
            <person name="Georgii-Hemming P."/>
            <person name="Gingeras T.R."/>
            <person name="Gojobori T."/>
            <person name="Green R.E."/>
            <person name="Gustincich S."/>
            <person name="Harbers M."/>
            <person name="Hayashi Y."/>
            <person name="Hensch T.K."/>
            <person name="Hirokawa N."/>
            <person name="Hill D."/>
            <person name="Huminiecki L."/>
            <person name="Iacono M."/>
            <person name="Ikeo K."/>
            <person name="Iwama A."/>
            <person name="Ishikawa T."/>
            <person name="Jakt M."/>
            <person name="Kanapin A."/>
            <person name="Katoh M."/>
            <person name="Kawasawa Y."/>
            <person name="Kelso J."/>
            <person name="Kitamura H."/>
            <person name="Kitano H."/>
            <person name="Kollias G."/>
            <person name="Krishnan S.P."/>
            <person name="Kruger A."/>
            <person name="Kummerfeld S.K."/>
            <person name="Kurochkin I.V."/>
            <person name="Lareau L.F."/>
            <person name="Lazarevic D."/>
            <person name="Lipovich L."/>
            <person name="Liu J."/>
            <person name="Liuni S."/>
            <person name="McWilliam S."/>
            <person name="Madan Babu M."/>
            <person name="Madera M."/>
            <person name="Marchionni L."/>
            <person name="Matsuda H."/>
            <person name="Matsuzawa S."/>
            <person name="Miki H."/>
            <person name="Mignone F."/>
            <person name="Miyake S."/>
            <person name="Morris K."/>
            <person name="Mottagui-Tabar S."/>
            <person name="Mulder N."/>
            <person name="Nakano N."/>
            <person name="Nakauchi H."/>
            <person name="Ng P."/>
            <person name="Nilsson R."/>
            <person name="Nishiguchi S."/>
            <person name="Nishikawa S."/>
            <person name="Nori F."/>
            <person name="Ohara O."/>
            <person name="Okazaki Y."/>
            <person name="Orlando V."/>
            <person name="Pang K.C."/>
            <person name="Pavan W.J."/>
            <person name="Pavesi G."/>
            <person name="Pesole G."/>
            <person name="Petrovsky N."/>
            <person name="Piazza S."/>
            <person name="Reed J."/>
            <person name="Reid J.F."/>
            <person name="Ring B.Z."/>
            <person name="Ringwald M."/>
            <person name="Rost B."/>
            <person name="Ruan Y."/>
            <person name="Salzberg S.L."/>
            <person name="Sandelin A."/>
            <person name="Schneider C."/>
            <person name="Schoenbach C."/>
            <person name="Sekiguchi K."/>
            <person name="Semple C.A."/>
            <person name="Seno S."/>
            <person name="Sessa L."/>
            <person name="Sheng Y."/>
            <person name="Shibata Y."/>
            <person name="Shimada H."/>
            <person name="Shimada K."/>
            <person name="Silva D."/>
            <person name="Sinclair B."/>
            <person name="Sperling S."/>
            <person name="Stupka E."/>
            <person name="Sugiura K."/>
            <person name="Sultana R."/>
            <person name="Takenaka Y."/>
            <person name="Taki K."/>
            <person name="Tammoja K."/>
            <person name="Tan S.L."/>
            <person name="Tang S."/>
            <person name="Taylor M.S."/>
            <person name="Tegner J."/>
            <person name="Teichmann S.A."/>
            <person name="Ueda H.R."/>
            <person name="van Nimwegen E."/>
            <person name="Verardo R."/>
            <person name="Wei C.L."/>
            <person name="Yagi K."/>
            <person name="Yamanishi H."/>
            <person name="Zabarovsky E."/>
            <person name="Zhu S."/>
            <person name="Zimmer A."/>
            <person name="Hide W."/>
            <person name="Bult C."/>
            <person name="Grimmond S.M."/>
            <person name="Teasdale R.D."/>
            <person name="Liu E.T."/>
            <person name="Brusic V."/>
            <person name="Quackenbush J."/>
            <person name="Wahlestedt C."/>
            <person name="Mattick J.S."/>
            <person name="Hume D.A."/>
            <person name="Kai C."/>
            <person name="Sasaki D."/>
            <person name="Tomaru Y."/>
            <person name="Fukuda S."/>
            <person name="Kanamori-Katayama M."/>
            <person name="Suzuki M."/>
            <person name="Aoki J."/>
            <person name="Arakawa T."/>
            <person name="Iida J."/>
            <person name="Imamura K."/>
            <person name="Itoh M."/>
            <person name="Kato T."/>
            <person name="Kawaji H."/>
            <person name="Kawagashira N."/>
            <person name="Kawashima T."/>
            <person name="Kojima M."/>
            <person name="Kondo S."/>
            <person name="Konno H."/>
            <person name="Nakano K."/>
            <person name="Ninomiya N."/>
            <person name="Nishio T."/>
            <person name="Okada M."/>
            <person name="Plessy C."/>
            <person name="Shibata K."/>
            <person name="Shiraki T."/>
            <person name="Suzuki S."/>
            <person name="Tagami M."/>
            <person name="Waki K."/>
            <person name="Watahiki A."/>
            <person name="Okamura-Oho Y."/>
            <person name="Suzuki H."/>
            <person name="Kawai J."/>
            <person name="Hayashizaki Y."/>
        </authorList>
    </citation>
    <scope>NUCLEOTIDE SEQUENCE [LARGE SCALE MRNA]</scope>
    <source>
        <strain evidence="13">C57BL/6J</strain>
        <tissue evidence="13">Pancreas</tissue>
        <tissue evidence="14">Stomach</tissue>
    </source>
</reference>
<reference evidence="16" key="4">
    <citation type="journal article" date="2009" name="PLoS Biol.">
        <title>Lineage-specific biology revealed by a finished genome assembly of the mouse.</title>
        <authorList>
            <person name="Church D.M."/>
            <person name="Goodstadt L."/>
            <person name="Hillier L.W."/>
            <person name="Zody M.C."/>
            <person name="Goldstein S."/>
            <person name="She X."/>
            <person name="Bult C.J."/>
            <person name="Agarwala R."/>
            <person name="Cherry J.L."/>
            <person name="DiCuccio M."/>
            <person name="Hlavina W."/>
            <person name="Kapustin Y."/>
            <person name="Meric P."/>
            <person name="Maglott D."/>
            <person name="Birtle Z."/>
            <person name="Marques A.C."/>
            <person name="Graves T."/>
            <person name="Zhou S."/>
            <person name="Teague B."/>
            <person name="Potamousis K."/>
            <person name="Churas C."/>
            <person name="Place M."/>
            <person name="Herschleb J."/>
            <person name="Runnheim R."/>
            <person name="Forrest D."/>
            <person name="Amos-Landgraf J."/>
            <person name="Schwartz D.C."/>
            <person name="Cheng Z."/>
            <person name="Lindblad-Toh K."/>
            <person name="Eichler E.E."/>
            <person name="Ponting C.P."/>
        </authorList>
    </citation>
    <scope>NUCLEOTIDE SEQUENCE [LARGE SCALE GENOMIC DNA]</scope>
    <source>
        <strain evidence="16">C57BL/6J</strain>
    </source>
</reference>
<reference evidence="9 10" key="5">
    <citation type="journal article" date="2004" name="Genome Res.">
        <title>The status, quality, and expansion of the NIH full-length cDNA project: the Mammalian Gene Collection (MGC).</title>
        <authorList>
            <consortium name="The MGC Project Team"/>
        </authorList>
    </citation>
    <scope>NUCLEOTIDE SEQUENCE [LARGE SCALE MRNA]</scope>
    <source>
        <tissue evidence="9 10">Brain</tissue>
    </source>
</reference>
<reference evidence="17" key="6">
    <citation type="journal article" date="2010" name="Cell">
        <title>A tissue-specific atlas of mouse protein phosphorylation and expression.</title>
        <authorList>
            <person name="Huttlin E.L."/>
            <person name="Jedrychowski M.P."/>
            <person name="Elias J.E."/>
            <person name="Goswami T."/>
            <person name="Rad R."/>
            <person name="Beausoleil S.A."/>
            <person name="Villen J."/>
            <person name="Haas W."/>
            <person name="Sowa M.E."/>
            <person name="Gygi S.P."/>
        </authorList>
    </citation>
    <scope>IDENTIFICATION BY MASS SPECTROMETRY [LARGE SCALE ANALYSIS]</scope>
</reference>
<reference evidence="7" key="7">
    <citation type="journal article" date="2013" name="J. Biol. Chem.">
        <title>Autoactivation of mouse trypsinogens is regulated by chymotrypsin C via cleavage of the autolysis loop.</title>
        <authorList>
            <person name="Nemeth B.C."/>
            <person name="Wartmann T."/>
            <person name="Halangk W."/>
            <person name="Sahin-Toth M."/>
        </authorList>
    </citation>
    <scope>FUNCTION</scope>
    <scope>CATALYTIC ACTIVITY</scope>
    <scope>ACTIVITY REGULATION</scope>
    <scope>CLEAVAGE BY AUTOCATALYSIS</scope>
</reference>
<proteinExistence type="evidence at protein level"/>
<protein>
    <recommendedName>
        <fullName evidence="15">Trypsin-5</fullName>
        <ecNumber evidence="4">3.4.21.4</ecNumber>
    </recommendedName>
    <alternativeName>
        <fullName evidence="5">Testicular-specific serine protease 4</fullName>
    </alternativeName>
    <alternativeName>
        <fullName evidence="6">Trypsinogen 9</fullName>
        <shortName evidence="6">T9</shortName>
    </alternativeName>
</protein>